<accession>A9BID3</accession>
<dbReference type="EMBL" id="CP000879">
    <property type="protein sequence ID" value="ABX32605.1"/>
    <property type="molecule type" value="Genomic_DNA"/>
</dbReference>
<dbReference type="RefSeq" id="WP_012209702.1">
    <property type="nucleotide sequence ID" value="NC_010003.1"/>
</dbReference>
<dbReference type="SMR" id="A9BID3"/>
<dbReference type="STRING" id="403833.Pmob_1918"/>
<dbReference type="KEGG" id="pmo:Pmob_1918"/>
<dbReference type="eggNOG" id="COG1220">
    <property type="taxonomic scope" value="Bacteria"/>
</dbReference>
<dbReference type="HOGENOM" id="CLU_033123_0_0_0"/>
<dbReference type="OrthoDB" id="9804062at2"/>
<dbReference type="Proteomes" id="UP000000789">
    <property type="component" value="Chromosome"/>
</dbReference>
<dbReference type="GO" id="GO:0009376">
    <property type="term" value="C:HslUV protease complex"/>
    <property type="evidence" value="ECO:0007669"/>
    <property type="project" value="UniProtKB-UniRule"/>
</dbReference>
<dbReference type="GO" id="GO:0005524">
    <property type="term" value="F:ATP binding"/>
    <property type="evidence" value="ECO:0007669"/>
    <property type="project" value="UniProtKB-UniRule"/>
</dbReference>
<dbReference type="GO" id="GO:0016887">
    <property type="term" value="F:ATP hydrolysis activity"/>
    <property type="evidence" value="ECO:0007669"/>
    <property type="project" value="InterPro"/>
</dbReference>
<dbReference type="GO" id="GO:0008233">
    <property type="term" value="F:peptidase activity"/>
    <property type="evidence" value="ECO:0007669"/>
    <property type="project" value="InterPro"/>
</dbReference>
<dbReference type="GO" id="GO:0036402">
    <property type="term" value="F:proteasome-activating activity"/>
    <property type="evidence" value="ECO:0007669"/>
    <property type="project" value="UniProtKB-UniRule"/>
</dbReference>
<dbReference type="GO" id="GO:0043335">
    <property type="term" value="P:protein unfolding"/>
    <property type="evidence" value="ECO:0007669"/>
    <property type="project" value="UniProtKB-UniRule"/>
</dbReference>
<dbReference type="GO" id="GO:0051603">
    <property type="term" value="P:proteolysis involved in protein catabolic process"/>
    <property type="evidence" value="ECO:0007669"/>
    <property type="project" value="TreeGrafter"/>
</dbReference>
<dbReference type="Gene3D" id="1.10.8.60">
    <property type="match status" value="1"/>
</dbReference>
<dbReference type="Gene3D" id="3.40.50.300">
    <property type="entry name" value="P-loop containing nucleotide triphosphate hydrolases"/>
    <property type="match status" value="2"/>
</dbReference>
<dbReference type="HAMAP" id="MF_00249">
    <property type="entry name" value="HslU"/>
    <property type="match status" value="1"/>
</dbReference>
<dbReference type="InterPro" id="IPR003593">
    <property type="entry name" value="AAA+_ATPase"/>
</dbReference>
<dbReference type="InterPro" id="IPR050052">
    <property type="entry name" value="ATP-dep_Clp_protease_ClpX"/>
</dbReference>
<dbReference type="InterPro" id="IPR003959">
    <property type="entry name" value="ATPase_AAA_core"/>
</dbReference>
<dbReference type="InterPro" id="IPR019489">
    <property type="entry name" value="Clp_ATPase_C"/>
</dbReference>
<dbReference type="InterPro" id="IPR004491">
    <property type="entry name" value="HslU"/>
</dbReference>
<dbReference type="InterPro" id="IPR027417">
    <property type="entry name" value="P-loop_NTPase"/>
</dbReference>
<dbReference type="NCBIfam" id="TIGR00390">
    <property type="entry name" value="hslU"/>
    <property type="match status" value="1"/>
</dbReference>
<dbReference type="NCBIfam" id="NF003544">
    <property type="entry name" value="PRK05201.1"/>
    <property type="match status" value="1"/>
</dbReference>
<dbReference type="PANTHER" id="PTHR48102">
    <property type="entry name" value="ATP-DEPENDENT CLP PROTEASE ATP-BINDING SUBUNIT CLPX-LIKE, MITOCHONDRIAL-RELATED"/>
    <property type="match status" value="1"/>
</dbReference>
<dbReference type="PANTHER" id="PTHR48102:SF3">
    <property type="entry name" value="ATP-DEPENDENT PROTEASE ATPASE SUBUNIT HSLU"/>
    <property type="match status" value="1"/>
</dbReference>
<dbReference type="Pfam" id="PF00004">
    <property type="entry name" value="AAA"/>
    <property type="match status" value="1"/>
</dbReference>
<dbReference type="Pfam" id="PF07724">
    <property type="entry name" value="AAA_2"/>
    <property type="match status" value="1"/>
</dbReference>
<dbReference type="SMART" id="SM00382">
    <property type="entry name" value="AAA"/>
    <property type="match status" value="1"/>
</dbReference>
<dbReference type="SMART" id="SM01086">
    <property type="entry name" value="ClpB_D2-small"/>
    <property type="match status" value="1"/>
</dbReference>
<dbReference type="SUPFAM" id="SSF52540">
    <property type="entry name" value="P-loop containing nucleoside triphosphate hydrolases"/>
    <property type="match status" value="1"/>
</dbReference>
<proteinExistence type="inferred from homology"/>
<organism>
    <name type="scientific">Petrotoga mobilis (strain DSM 10674 / SJ95)</name>
    <dbReference type="NCBI Taxonomy" id="403833"/>
    <lineage>
        <taxon>Bacteria</taxon>
        <taxon>Thermotogati</taxon>
        <taxon>Thermotogota</taxon>
        <taxon>Thermotogae</taxon>
        <taxon>Petrotogales</taxon>
        <taxon>Petrotogaceae</taxon>
        <taxon>Petrotoga</taxon>
    </lineage>
</organism>
<name>HSLU_PETMO</name>
<comment type="function">
    <text evidence="1">ATPase subunit of a proteasome-like degradation complex; this subunit has chaperone activity. The binding of ATP and its subsequent hydrolysis by HslU are essential for unfolding of protein substrates subsequently hydrolyzed by HslV. HslU recognizes the N-terminal part of its protein substrates and unfolds these before they are guided to HslV for hydrolysis.</text>
</comment>
<comment type="subunit">
    <text evidence="1">A double ring-shaped homohexamer of HslV is capped on each side by a ring-shaped HslU homohexamer. The assembly of the HslU/HslV complex is dependent on binding of ATP.</text>
</comment>
<comment type="subcellular location">
    <subcellularLocation>
        <location evidence="1">Cytoplasm</location>
    </subcellularLocation>
</comment>
<comment type="similarity">
    <text evidence="1">Belongs to the ClpX chaperone family. HslU subfamily.</text>
</comment>
<feature type="chain" id="PRO_1000078449" description="ATP-dependent protease ATPase subunit HslU">
    <location>
        <begin position="1"/>
        <end position="469"/>
    </location>
</feature>
<feature type="binding site" evidence="1">
    <location>
        <position position="21"/>
    </location>
    <ligand>
        <name>ATP</name>
        <dbReference type="ChEBI" id="CHEBI:30616"/>
    </ligand>
</feature>
<feature type="binding site" evidence="1">
    <location>
        <begin position="63"/>
        <end position="68"/>
    </location>
    <ligand>
        <name>ATP</name>
        <dbReference type="ChEBI" id="CHEBI:30616"/>
    </ligand>
</feature>
<feature type="binding site" evidence="1">
    <location>
        <position position="282"/>
    </location>
    <ligand>
        <name>ATP</name>
        <dbReference type="ChEBI" id="CHEBI:30616"/>
    </ligand>
</feature>
<feature type="binding site" evidence="1">
    <location>
        <position position="347"/>
    </location>
    <ligand>
        <name>ATP</name>
        <dbReference type="ChEBI" id="CHEBI:30616"/>
    </ligand>
</feature>
<feature type="binding site" evidence="1">
    <location>
        <position position="419"/>
    </location>
    <ligand>
        <name>ATP</name>
        <dbReference type="ChEBI" id="CHEBI:30616"/>
    </ligand>
</feature>
<protein>
    <recommendedName>
        <fullName evidence="1">ATP-dependent protease ATPase subunit HslU</fullName>
    </recommendedName>
    <alternativeName>
        <fullName evidence="1">Unfoldase HslU</fullName>
    </alternativeName>
</protein>
<sequence length="469" mass="53567">MNKIDELTPKKVVEKLDNYIIGQKEAKKQVAIALRNRIRRLSLSEDVRKDVIPKNILMIGSTGVGKTEIARRLAEVANAPFVKVEATRFTEVGYVGKNVESMVRELVDSSVNMVKKEMMEEVKDKAQRLVEERIVEVLVPSKKRAKAQPSFMDVMQLFNQNAEYSQNKDYDENEDENIRRRREELLEKLRNGELEDVEIEVEVEEQSSPMFAGLGPELEDMGIQFGEMFQNLMPKKKKRRRMKISEARKVLEPIESEKLIDQDKLIQEGVSRAENSGIIFIDEIDKITSKGVSSGPDVSREGVQRDLLPIVEGTTVMTKYGSISTDYILFIAAGAFSEAKPSDLIPELQGRFPIRAELSDLTKEDFIRILTQPKNAILKQYQYLLQTDGVKIEFTEDGVERMADIAFELNEKVENIGARRLYTVVEKVLEEVSFEAPASGEWELKIDSNYVDLRLGKVYGDEDLREYIL</sequence>
<evidence type="ECO:0000255" key="1">
    <source>
        <dbReference type="HAMAP-Rule" id="MF_00249"/>
    </source>
</evidence>
<reference key="1">
    <citation type="submission" date="2007-11" db="EMBL/GenBank/DDBJ databases">
        <title>Complete sequence of Petroga mobilis SJ95.</title>
        <authorList>
            <consortium name="US DOE Joint Genome Institute"/>
            <person name="Copeland A."/>
            <person name="Lucas S."/>
            <person name="Lapidus A."/>
            <person name="Barry K."/>
            <person name="Glavina del Rio T."/>
            <person name="Dalin E."/>
            <person name="Tice H."/>
            <person name="Pitluck S."/>
            <person name="Meincke L."/>
            <person name="Brettin T."/>
            <person name="Bruce D."/>
            <person name="Detter J.C."/>
            <person name="Han C."/>
            <person name="Kuske C.R."/>
            <person name="Schmutz J."/>
            <person name="Larimer F."/>
            <person name="Land M."/>
            <person name="Hauser L."/>
            <person name="Kyrpides N."/>
            <person name="Mikhailova N."/>
            <person name="Noll K."/>
            <person name="Richardson P."/>
        </authorList>
    </citation>
    <scope>NUCLEOTIDE SEQUENCE [LARGE SCALE GENOMIC DNA]</scope>
    <source>
        <strain>DSM 10674 / SJ95</strain>
    </source>
</reference>
<gene>
    <name evidence="1" type="primary">hslU</name>
    <name type="ordered locus">Pmob_1918</name>
</gene>
<keyword id="KW-0067">ATP-binding</keyword>
<keyword id="KW-0143">Chaperone</keyword>
<keyword id="KW-0963">Cytoplasm</keyword>
<keyword id="KW-0547">Nucleotide-binding</keyword>
<keyword id="KW-0346">Stress response</keyword>